<proteinExistence type="inferred from homology"/>
<name>MTD1_NEIMC</name>
<organism>
    <name type="scientific">Neisseria meningitidis serogroup C</name>
    <dbReference type="NCBI Taxonomy" id="135720"/>
    <lineage>
        <taxon>Bacteria</taxon>
        <taxon>Pseudomonadati</taxon>
        <taxon>Pseudomonadota</taxon>
        <taxon>Betaproteobacteria</taxon>
        <taxon>Neisseriales</taxon>
        <taxon>Neisseriaceae</taxon>
        <taxon>Neisseria</taxon>
    </lineage>
</organism>
<feature type="chain" id="PRO_0000087902" description="Type II methyltransferase M.NmeDI">
    <location>
        <begin position="1"/>
        <end position="420"/>
    </location>
</feature>
<feature type="domain" description="SAM-dependent MTase C5-type" evidence="1">
    <location>
        <begin position="56"/>
        <end position="411"/>
    </location>
</feature>
<feature type="region of interest" description="Disordered" evidence="2">
    <location>
        <begin position="1"/>
        <end position="23"/>
    </location>
</feature>
<feature type="active site" evidence="1">
    <location>
        <position position="148"/>
    </location>
</feature>
<dbReference type="EC" id="2.1.1.37"/>
<dbReference type="EMBL" id="AJ238948">
    <property type="protein sequence ID" value="CAB59897.1"/>
    <property type="molecule type" value="Genomic_DNA"/>
</dbReference>
<dbReference type="SMR" id="Q9RLM4"/>
<dbReference type="REBASE" id="4188">
    <property type="entry name" value="M.NmeDI"/>
</dbReference>
<dbReference type="PRO" id="PR:Q9RLM4"/>
<dbReference type="GO" id="GO:0003886">
    <property type="term" value="F:DNA (cytosine-5-)-methyltransferase activity"/>
    <property type="evidence" value="ECO:0007669"/>
    <property type="project" value="UniProtKB-EC"/>
</dbReference>
<dbReference type="GO" id="GO:0003677">
    <property type="term" value="F:DNA binding"/>
    <property type="evidence" value="ECO:0007669"/>
    <property type="project" value="UniProtKB-KW"/>
</dbReference>
<dbReference type="GO" id="GO:0009307">
    <property type="term" value="P:DNA restriction-modification system"/>
    <property type="evidence" value="ECO:0007669"/>
    <property type="project" value="UniProtKB-KW"/>
</dbReference>
<dbReference type="GO" id="GO:0032259">
    <property type="term" value="P:methylation"/>
    <property type="evidence" value="ECO:0007669"/>
    <property type="project" value="UniProtKB-KW"/>
</dbReference>
<dbReference type="GO" id="GO:0044027">
    <property type="term" value="P:negative regulation of gene expression via chromosomal CpG island methylation"/>
    <property type="evidence" value="ECO:0007669"/>
    <property type="project" value="TreeGrafter"/>
</dbReference>
<dbReference type="Gene3D" id="3.90.120.10">
    <property type="entry name" value="DNA Methylase, subunit A, domain 2"/>
    <property type="match status" value="1"/>
</dbReference>
<dbReference type="Gene3D" id="3.40.50.150">
    <property type="entry name" value="Vaccinia Virus protein VP39"/>
    <property type="match status" value="1"/>
</dbReference>
<dbReference type="InterPro" id="IPR050390">
    <property type="entry name" value="C5-Methyltransferase"/>
</dbReference>
<dbReference type="InterPro" id="IPR001525">
    <property type="entry name" value="C5_MeTfrase"/>
</dbReference>
<dbReference type="InterPro" id="IPR029063">
    <property type="entry name" value="SAM-dependent_MTases_sf"/>
</dbReference>
<dbReference type="NCBIfam" id="TIGR00675">
    <property type="entry name" value="dcm"/>
    <property type="match status" value="1"/>
</dbReference>
<dbReference type="PANTHER" id="PTHR10629">
    <property type="entry name" value="CYTOSINE-SPECIFIC METHYLTRANSFERASE"/>
    <property type="match status" value="1"/>
</dbReference>
<dbReference type="PANTHER" id="PTHR10629:SF52">
    <property type="entry name" value="DNA (CYTOSINE-5)-METHYLTRANSFERASE 1"/>
    <property type="match status" value="1"/>
</dbReference>
<dbReference type="Pfam" id="PF00145">
    <property type="entry name" value="DNA_methylase"/>
    <property type="match status" value="1"/>
</dbReference>
<dbReference type="PRINTS" id="PR00105">
    <property type="entry name" value="C5METTRFRASE"/>
</dbReference>
<dbReference type="SUPFAM" id="SSF53335">
    <property type="entry name" value="S-adenosyl-L-methionine-dependent methyltransferases"/>
    <property type="match status" value="1"/>
</dbReference>
<dbReference type="PROSITE" id="PS51679">
    <property type="entry name" value="SAM_MT_C5"/>
    <property type="match status" value="1"/>
</dbReference>
<reference key="1">
    <citation type="journal article" date="2000" name="J. Bacteriol.">
        <title>Differential distribution of novel restriction-modification systems in clonal lineages of Neisseria meningitidis.</title>
        <authorList>
            <person name="Claus H."/>
            <person name="Friedrich A."/>
            <person name="Frosch M."/>
            <person name="Vogel U."/>
        </authorList>
    </citation>
    <scope>NUCLEOTIDE SEQUENCE [GENOMIC DNA]</scope>
    <source>
        <strain>2120 / Serogroup C / Serotype NT</strain>
    </source>
</reference>
<reference key="2">
    <citation type="journal article" date="2003" name="Nucleic Acids Res.">
        <title>A nomenclature for restriction enzymes, DNA methyltransferases, homing endonucleases and their genes.</title>
        <authorList>
            <person name="Roberts R.J."/>
            <person name="Belfort M."/>
            <person name="Bestor T."/>
            <person name="Bhagwat A.S."/>
            <person name="Bickle T.A."/>
            <person name="Bitinaite J."/>
            <person name="Blumenthal R.M."/>
            <person name="Degtyarev S.K."/>
            <person name="Dryden D.T."/>
            <person name="Dybvig K."/>
            <person name="Firman K."/>
            <person name="Gromova E.S."/>
            <person name="Gumport R.I."/>
            <person name="Halford S.E."/>
            <person name="Hattman S."/>
            <person name="Heitman J."/>
            <person name="Hornby D.P."/>
            <person name="Janulaitis A."/>
            <person name="Jeltsch A."/>
            <person name="Josephsen J."/>
            <person name="Kiss A."/>
            <person name="Klaenhammer T.R."/>
            <person name="Kobayashi I."/>
            <person name="Kong H."/>
            <person name="Krueger D.H."/>
            <person name="Lacks S."/>
            <person name="Marinus M.G."/>
            <person name="Miyahara M."/>
            <person name="Morgan R.D."/>
            <person name="Murray N.E."/>
            <person name="Nagaraja V."/>
            <person name="Piekarowicz A."/>
            <person name="Pingoud A."/>
            <person name="Raleigh E."/>
            <person name="Rao D.N."/>
            <person name="Reich N."/>
            <person name="Repin V.E."/>
            <person name="Selker E.U."/>
            <person name="Shaw P.C."/>
            <person name="Stein D.C."/>
            <person name="Stoddard B.L."/>
            <person name="Szybalski W."/>
            <person name="Trautner T.A."/>
            <person name="Van Etten J.L."/>
            <person name="Vitor J.M."/>
            <person name="Wilson G.G."/>
            <person name="Xu S.Y."/>
        </authorList>
    </citation>
    <scope>NOMENCLATURE</scope>
</reference>
<protein>
    <recommendedName>
        <fullName evidence="3">Type II methyltransferase M.NmeDI</fullName>
        <shortName evidence="3">M.NmeDI</shortName>
        <ecNumber>2.1.1.37</ecNumber>
    </recommendedName>
    <alternativeName>
        <fullName>Cytosine-specific methyltransferase NmeDIP</fullName>
    </alternativeName>
    <alternativeName>
        <fullName>Probable modification methylase NmeDIP</fullName>
    </alternativeName>
</protein>
<comment type="function">
    <text evidence="3">A methylase that recognizes the double-stranded sequence 5'-RCCGGB-3', methylates C-2 on both strands, and protects the DNA from cleavage by the NmeDI endonuclease.</text>
</comment>
<comment type="catalytic activity">
    <reaction>
        <text>a 2'-deoxycytidine in DNA + S-adenosyl-L-methionine = a 5-methyl-2'-deoxycytidine in DNA + S-adenosyl-L-homocysteine + H(+)</text>
        <dbReference type="Rhea" id="RHEA:13681"/>
        <dbReference type="Rhea" id="RHEA-COMP:11369"/>
        <dbReference type="Rhea" id="RHEA-COMP:11370"/>
        <dbReference type="ChEBI" id="CHEBI:15378"/>
        <dbReference type="ChEBI" id="CHEBI:57856"/>
        <dbReference type="ChEBI" id="CHEBI:59789"/>
        <dbReference type="ChEBI" id="CHEBI:85452"/>
        <dbReference type="ChEBI" id="CHEBI:85454"/>
        <dbReference type="EC" id="2.1.1.37"/>
    </reaction>
</comment>
<comment type="similarity">
    <text evidence="1">Belongs to the class I-like SAM-binding methyltransferase superfamily. C5-methyltransferase family.</text>
</comment>
<evidence type="ECO:0000255" key="1">
    <source>
        <dbReference type="PROSITE-ProRule" id="PRU01016"/>
    </source>
</evidence>
<evidence type="ECO:0000256" key="2">
    <source>
        <dbReference type="SAM" id="MobiDB-lite"/>
    </source>
</evidence>
<evidence type="ECO:0000303" key="3">
    <source>
    </source>
</evidence>
<keyword id="KW-0238">DNA-binding</keyword>
<keyword id="KW-0489">Methyltransferase</keyword>
<keyword id="KW-0680">Restriction system</keyword>
<keyword id="KW-0949">S-adenosyl-L-methionine</keyword>
<keyword id="KW-0808">Transferase</keyword>
<accession>Q9RLM4</accession>
<sequence>MMSLKIQPAVPKKSDKPSATNRDCQNFKREKNNLPFQLTDKSCNLDISIRQERKKTLIFSFFSGAGFLDLGFELSGFDIAFVNEVHPPFLEAYKYSRSRMDIPKPKYGYFKGSIDECLYAEKAKDLAGWVKKEKQNGIIVGFIGGPPCPDFSIAGKNKGKDGENGKLSQSYVDLICKNQPDFFVFENVKGLYRTAKHREFFNALKRQLSDFGYVCTEKLINAIEYGVPQDRERIILVGFLSQHVDALQKFDWDAHISFPDALEKDWPTTEEVGRVVSQPANIYPELTVQYWFNRNGVDTHPNASKHFQPRAGLEKFQTISEGDDKKKSYKRLHRWRYSPTAAYGNNEVHIHPYLPRRISAAEALAIQSLPKEFELPDNMTLSNMFKTIGNGVPFLAAKGIAMTLKSYLENHYERTKTDGC</sequence>
<gene>
    <name type="primary">nmeDIMP</name>
</gene>